<sequence length="212" mass="23677">MGMKLHGPAMSPAVMRVIATLKEKDLDFELVPVNMQAGDHKKEPFITLNPFGQVPAFEDGDLKLFESRAITQYIAHTYADKGNQLLANDPKKMAIMSVWMEVESQKFDPVASKLTFEIVIKPMLGMVTDDAAVAENEEKLGKVLDVYESRLKDSKYLGGDSFTLADLHHAPAMNYLMGTKVKSLFDSRPHVSAWCADILARPAWSKAIEYKQ</sequence>
<proteinExistence type="evidence at protein level"/>
<organism>
    <name type="scientific">Hyoscyamus muticus</name>
    <name type="common">Egyptian henbane</name>
    <dbReference type="NCBI Taxonomy" id="35626"/>
    <lineage>
        <taxon>Eukaryota</taxon>
        <taxon>Viridiplantae</taxon>
        <taxon>Streptophyta</taxon>
        <taxon>Embryophyta</taxon>
        <taxon>Tracheophyta</taxon>
        <taxon>Spermatophyta</taxon>
        <taxon>Magnoliopsida</taxon>
        <taxon>eudicotyledons</taxon>
        <taxon>Gunneridae</taxon>
        <taxon>Pentapetalae</taxon>
        <taxon>asterids</taxon>
        <taxon>lamiids</taxon>
        <taxon>Solanales</taxon>
        <taxon>Solanaceae</taxon>
        <taxon>Solanoideae</taxon>
        <taxon>Hyoscyameae</taxon>
        <taxon>Hyoscyamus</taxon>
    </lineage>
</organism>
<reference key="1">
    <citation type="journal article" date="1993" name="Plant Physiol.">
        <title>A soluble auxin-binding protein from Hyoscyamus muticus is a glutathione S-transferase.</title>
        <authorList>
            <person name="Bilang J."/>
            <person name="Macdonald H."/>
            <person name="King P.J."/>
            <person name="Sturm A."/>
        </authorList>
    </citation>
    <scope>NUCLEOTIDE SEQUENCE [MRNA]</scope>
    <scope>PARTIAL PROTEIN SEQUENCE</scope>
    <scope>FUNCTION</scope>
    <scope>CATALYTIC ACTIVITY</scope>
</reference>
<keyword id="KW-0927">Auxin signaling pathway</keyword>
<keyword id="KW-0903">Direct protein sequencing</keyword>
<keyword id="KW-0808">Transferase</keyword>
<name>GSTF_HYOMU</name>
<accession>P46423</accession>
<protein>
    <recommendedName>
        <fullName evidence="5">Glutathione S-transferase</fullName>
        <ecNumber evidence="4">2.5.1.18</ecNumber>
    </recommendedName>
    <alternativeName>
        <fullName evidence="5">25 kDa auxin-binding protein</fullName>
    </alternativeName>
    <alternativeName>
        <fullName evidence="5">GST class-phi</fullName>
    </alternativeName>
</protein>
<comment type="function">
    <text evidence="4">Conjugation of reduced glutathione to a wide number of exogenous and endogenous hydrophobic electrophiles.</text>
</comment>
<comment type="catalytic activity">
    <reaction evidence="4">
        <text>RX + glutathione = an S-substituted glutathione + a halide anion + H(+)</text>
        <dbReference type="Rhea" id="RHEA:16437"/>
        <dbReference type="ChEBI" id="CHEBI:15378"/>
        <dbReference type="ChEBI" id="CHEBI:16042"/>
        <dbReference type="ChEBI" id="CHEBI:17792"/>
        <dbReference type="ChEBI" id="CHEBI:57925"/>
        <dbReference type="ChEBI" id="CHEBI:90779"/>
        <dbReference type="EC" id="2.5.1.18"/>
    </reaction>
</comment>
<comment type="similarity">
    <text evidence="6">Belongs to the GST superfamily. Phi family.</text>
</comment>
<dbReference type="EC" id="2.5.1.18" evidence="4"/>
<dbReference type="EMBL" id="X78203">
    <property type="protein sequence ID" value="CAA55039.1"/>
    <property type="molecule type" value="mRNA"/>
</dbReference>
<dbReference type="SMR" id="P46423"/>
<dbReference type="GO" id="GO:0005737">
    <property type="term" value="C:cytoplasm"/>
    <property type="evidence" value="ECO:0007669"/>
    <property type="project" value="TreeGrafter"/>
</dbReference>
<dbReference type="GO" id="GO:0043295">
    <property type="term" value="F:glutathione binding"/>
    <property type="evidence" value="ECO:0007669"/>
    <property type="project" value="TreeGrafter"/>
</dbReference>
<dbReference type="GO" id="GO:0004364">
    <property type="term" value="F:glutathione transferase activity"/>
    <property type="evidence" value="ECO:0007669"/>
    <property type="project" value="UniProtKB-EC"/>
</dbReference>
<dbReference type="GO" id="GO:0009734">
    <property type="term" value="P:auxin-activated signaling pathway"/>
    <property type="evidence" value="ECO:0007669"/>
    <property type="project" value="UniProtKB-KW"/>
</dbReference>
<dbReference type="GO" id="GO:0006749">
    <property type="term" value="P:glutathione metabolic process"/>
    <property type="evidence" value="ECO:0007669"/>
    <property type="project" value="TreeGrafter"/>
</dbReference>
<dbReference type="GO" id="GO:0009407">
    <property type="term" value="P:toxin catabolic process"/>
    <property type="evidence" value="ECO:0007669"/>
    <property type="project" value="UniProtKB-ARBA"/>
</dbReference>
<dbReference type="CDD" id="cd03187">
    <property type="entry name" value="GST_C_Phi"/>
    <property type="match status" value="1"/>
</dbReference>
<dbReference type="CDD" id="cd03053">
    <property type="entry name" value="GST_N_Phi"/>
    <property type="match status" value="1"/>
</dbReference>
<dbReference type="FunFam" id="1.20.1050.10:FF:000004">
    <property type="entry name" value="Glutathione S-transferase F2"/>
    <property type="match status" value="1"/>
</dbReference>
<dbReference type="FunFam" id="3.40.30.10:FF:000016">
    <property type="entry name" value="Glutathione S-transferase F2"/>
    <property type="match status" value="1"/>
</dbReference>
<dbReference type="Gene3D" id="1.20.1050.10">
    <property type="match status" value="1"/>
</dbReference>
<dbReference type="Gene3D" id="3.40.30.10">
    <property type="entry name" value="Glutaredoxin"/>
    <property type="match status" value="1"/>
</dbReference>
<dbReference type="InterPro" id="IPR010987">
    <property type="entry name" value="Glutathione-S-Trfase_C-like"/>
</dbReference>
<dbReference type="InterPro" id="IPR036282">
    <property type="entry name" value="Glutathione-S-Trfase_C_sf"/>
</dbReference>
<dbReference type="InterPro" id="IPR004045">
    <property type="entry name" value="Glutathione_S-Trfase_N"/>
</dbReference>
<dbReference type="InterPro" id="IPR004046">
    <property type="entry name" value="GST_C"/>
</dbReference>
<dbReference type="InterPro" id="IPR034347">
    <property type="entry name" value="GST_Phi_C"/>
</dbReference>
<dbReference type="InterPro" id="IPR036249">
    <property type="entry name" value="Thioredoxin-like_sf"/>
</dbReference>
<dbReference type="PANTHER" id="PTHR43900">
    <property type="entry name" value="GLUTATHIONE S-TRANSFERASE RHO"/>
    <property type="match status" value="1"/>
</dbReference>
<dbReference type="PANTHER" id="PTHR43900:SF27">
    <property type="entry name" value="GLUTATHIONE S-TRANSFERASE-LIKE"/>
    <property type="match status" value="1"/>
</dbReference>
<dbReference type="Pfam" id="PF00043">
    <property type="entry name" value="GST_C"/>
    <property type="match status" value="1"/>
</dbReference>
<dbReference type="Pfam" id="PF02798">
    <property type="entry name" value="GST_N"/>
    <property type="match status" value="1"/>
</dbReference>
<dbReference type="SFLD" id="SFLDG01154">
    <property type="entry name" value="Main.5:_Phi-like"/>
    <property type="match status" value="1"/>
</dbReference>
<dbReference type="SFLD" id="SFLDG00358">
    <property type="entry name" value="Main_(cytGST)"/>
    <property type="match status" value="1"/>
</dbReference>
<dbReference type="SUPFAM" id="SSF47616">
    <property type="entry name" value="GST C-terminal domain-like"/>
    <property type="match status" value="1"/>
</dbReference>
<dbReference type="SUPFAM" id="SSF52833">
    <property type="entry name" value="Thioredoxin-like"/>
    <property type="match status" value="1"/>
</dbReference>
<dbReference type="PROSITE" id="PS50405">
    <property type="entry name" value="GST_CTER"/>
    <property type="match status" value="1"/>
</dbReference>
<dbReference type="PROSITE" id="PS50404">
    <property type="entry name" value="GST_NTER"/>
    <property type="match status" value="1"/>
</dbReference>
<evidence type="ECO:0000250" key="1"/>
<evidence type="ECO:0000250" key="2">
    <source>
        <dbReference type="UniProtKB" id="O80852"/>
    </source>
</evidence>
<evidence type="ECO:0000255" key="3"/>
<evidence type="ECO:0000269" key="4">
    <source>
    </source>
</evidence>
<evidence type="ECO:0000303" key="5">
    <source>
    </source>
</evidence>
<evidence type="ECO:0000305" key="6"/>
<feature type="chain" id="PRO_0000185854" description="Glutathione S-transferase">
    <location>
        <begin position="1"/>
        <end position="212"/>
    </location>
</feature>
<feature type="domain" description="GST N-terminal" evidence="3">
    <location>
        <begin position="1"/>
        <end position="82"/>
    </location>
</feature>
<feature type="domain" description="GST C-terminal" evidence="3">
    <location>
        <begin position="89"/>
        <end position="212"/>
    </location>
</feature>
<feature type="binding site" evidence="1">
    <location>
        <position position="11"/>
    </location>
    <ligand>
        <name>glutathione</name>
        <dbReference type="ChEBI" id="CHEBI:57925"/>
    </ligand>
</feature>
<feature type="binding site" evidence="2">
    <location>
        <begin position="12"/>
        <end position="13"/>
    </location>
    <ligand>
        <name>glutathione</name>
        <dbReference type="ChEBI" id="CHEBI:57925"/>
    </ligand>
</feature>
<feature type="binding site" evidence="2">
    <location>
        <begin position="40"/>
        <end position="41"/>
    </location>
    <ligand>
        <name>glutathione</name>
        <dbReference type="ChEBI" id="CHEBI:57925"/>
    </ligand>
</feature>
<feature type="binding site" evidence="2">
    <location>
        <begin position="53"/>
        <end position="54"/>
    </location>
    <ligand>
        <name>glutathione</name>
        <dbReference type="ChEBI" id="CHEBI:57925"/>
    </ligand>
</feature>
<feature type="binding site" evidence="2">
    <location>
        <begin position="66"/>
        <end position="67"/>
    </location>
    <ligand>
        <name>glutathione</name>
        <dbReference type="ChEBI" id="CHEBI:57925"/>
    </ligand>
</feature>